<feature type="initiator methionine" description="Removed" evidence="2 3">
    <location>
        <position position="1"/>
    </location>
</feature>
<feature type="chain" id="PRO_0000125051" description="Large ribosomal subunit protein uL5">
    <location>
        <begin position="2"/>
        <end position="177"/>
    </location>
</feature>
<feature type="sequence conflict" description="In Ref. 3; AA sequence." evidence="4" ref="3">
    <original>N</original>
    <variation>R</variation>
    <location>
        <position position="134"/>
    </location>
</feature>
<feature type="turn" evidence="6">
    <location>
        <begin position="13"/>
        <end position="15"/>
    </location>
</feature>
<feature type="strand" evidence="6">
    <location>
        <begin position="18"/>
        <end position="27"/>
    </location>
</feature>
<feature type="helix" evidence="6">
    <location>
        <begin position="39"/>
        <end position="45"/>
    </location>
</feature>
<feature type="strand" evidence="7">
    <location>
        <begin position="46"/>
        <end position="48"/>
    </location>
</feature>
<feature type="strand" evidence="6">
    <location>
        <begin position="51"/>
        <end position="54"/>
    </location>
</feature>
<feature type="turn" evidence="6">
    <location>
        <begin position="60"/>
        <end position="62"/>
    </location>
</feature>
<feature type="strand" evidence="6">
    <location>
        <begin position="66"/>
        <end position="76"/>
    </location>
</feature>
<feature type="helix" evidence="6">
    <location>
        <begin position="79"/>
        <end position="88"/>
    </location>
</feature>
<feature type="helix" evidence="6">
    <location>
        <begin position="89"/>
        <end position="91"/>
    </location>
</feature>
<feature type="helix" evidence="6">
    <location>
        <begin position="96"/>
        <end position="98"/>
    </location>
</feature>
<feature type="strand" evidence="6">
    <location>
        <begin position="101"/>
        <end position="103"/>
    </location>
</feature>
<feature type="strand" evidence="6">
    <location>
        <begin position="105"/>
        <end position="107"/>
    </location>
</feature>
<feature type="strand" evidence="6">
    <location>
        <begin position="130"/>
        <end position="136"/>
    </location>
</feature>
<feature type="helix" evidence="6">
    <location>
        <begin position="138"/>
        <end position="143"/>
    </location>
</feature>
<feature type="strand" evidence="5">
    <location>
        <begin position="145"/>
        <end position="148"/>
    </location>
</feature>
<feature type="helix" evidence="6">
    <location>
        <begin position="154"/>
        <end position="156"/>
    </location>
</feature>
<feature type="helix" evidence="6">
    <location>
        <begin position="160"/>
        <end position="168"/>
    </location>
</feature>
<feature type="turn" evidence="6">
    <location>
        <begin position="169"/>
        <end position="171"/>
    </location>
</feature>
<dbReference type="EMBL" id="X58395">
    <property type="protein sequence ID" value="CAA41284.1"/>
    <property type="molecule type" value="Genomic_DNA"/>
</dbReference>
<dbReference type="EMBL" id="AY596297">
    <property type="protein sequence ID" value="AAV46516.1"/>
    <property type="molecule type" value="Genomic_DNA"/>
</dbReference>
<dbReference type="PIR" id="S16535">
    <property type="entry name" value="R5HSL5"/>
</dbReference>
<dbReference type="RefSeq" id="WP_004957391.1">
    <property type="nucleotide sequence ID" value="NZ_CP039138.1"/>
</dbReference>
<dbReference type="PDB" id="1FFK">
    <property type="method" value="X-ray"/>
    <property type="resolution" value="2.40 A"/>
    <property type="chains" value="D=2-177"/>
</dbReference>
<dbReference type="PDB" id="1JJ2">
    <property type="method" value="X-ray"/>
    <property type="resolution" value="2.40 A"/>
    <property type="chains" value="D=2-177"/>
</dbReference>
<dbReference type="PDB" id="1K73">
    <property type="method" value="X-ray"/>
    <property type="resolution" value="3.01 A"/>
    <property type="chains" value="F=2-177"/>
</dbReference>
<dbReference type="PDB" id="1K8A">
    <property type="method" value="X-ray"/>
    <property type="resolution" value="3.00 A"/>
    <property type="chains" value="F=2-177"/>
</dbReference>
<dbReference type="PDB" id="1K9M">
    <property type="method" value="X-ray"/>
    <property type="resolution" value="3.00 A"/>
    <property type="chains" value="F=2-177"/>
</dbReference>
<dbReference type="PDB" id="1KC8">
    <property type="method" value="X-ray"/>
    <property type="resolution" value="3.01 A"/>
    <property type="chains" value="F=2-177"/>
</dbReference>
<dbReference type="PDB" id="1KD1">
    <property type="method" value="X-ray"/>
    <property type="resolution" value="3.00 A"/>
    <property type="chains" value="F=2-177"/>
</dbReference>
<dbReference type="PDB" id="1KQS">
    <property type="method" value="X-ray"/>
    <property type="resolution" value="3.10 A"/>
    <property type="chains" value="D=2-177"/>
</dbReference>
<dbReference type="PDB" id="1M1K">
    <property type="method" value="X-ray"/>
    <property type="resolution" value="3.20 A"/>
    <property type="chains" value="F=2-177"/>
</dbReference>
<dbReference type="PDB" id="1M90">
    <property type="method" value="X-ray"/>
    <property type="resolution" value="2.80 A"/>
    <property type="chains" value="F=2-177"/>
</dbReference>
<dbReference type="PDB" id="1ML5">
    <property type="method" value="EM"/>
    <property type="resolution" value="14.00 A"/>
    <property type="chains" value="g=2-177"/>
</dbReference>
<dbReference type="PDB" id="1N8R">
    <property type="method" value="X-ray"/>
    <property type="resolution" value="3.00 A"/>
    <property type="chains" value="F=2-177"/>
</dbReference>
<dbReference type="PDB" id="1NJI">
    <property type="method" value="X-ray"/>
    <property type="resolution" value="3.00 A"/>
    <property type="chains" value="F=2-177"/>
</dbReference>
<dbReference type="PDB" id="1Q7Y">
    <property type="method" value="X-ray"/>
    <property type="resolution" value="3.20 A"/>
    <property type="chains" value="F=2-177"/>
</dbReference>
<dbReference type="PDB" id="1Q81">
    <property type="method" value="X-ray"/>
    <property type="resolution" value="2.95 A"/>
    <property type="chains" value="F=2-177"/>
</dbReference>
<dbReference type="PDB" id="1Q82">
    <property type="method" value="X-ray"/>
    <property type="resolution" value="2.98 A"/>
    <property type="chains" value="F=2-177"/>
</dbReference>
<dbReference type="PDB" id="1Q86">
    <property type="method" value="X-ray"/>
    <property type="resolution" value="3.00 A"/>
    <property type="chains" value="F=2-177"/>
</dbReference>
<dbReference type="PDB" id="1QVF">
    <property type="method" value="X-ray"/>
    <property type="resolution" value="3.10 A"/>
    <property type="chains" value="D=2-177"/>
</dbReference>
<dbReference type="PDB" id="1QVG">
    <property type="method" value="X-ray"/>
    <property type="resolution" value="2.90 A"/>
    <property type="chains" value="D=2-177"/>
</dbReference>
<dbReference type="PDB" id="1S72">
    <property type="method" value="X-ray"/>
    <property type="resolution" value="2.40 A"/>
    <property type="chains" value="D=1-177"/>
</dbReference>
<dbReference type="PDB" id="1VQ4">
    <property type="method" value="X-ray"/>
    <property type="resolution" value="2.70 A"/>
    <property type="chains" value="D=1-177"/>
</dbReference>
<dbReference type="PDB" id="1VQ5">
    <property type="method" value="X-ray"/>
    <property type="resolution" value="2.60 A"/>
    <property type="chains" value="D=1-177"/>
</dbReference>
<dbReference type="PDB" id="1VQ6">
    <property type="method" value="X-ray"/>
    <property type="resolution" value="2.70 A"/>
    <property type="chains" value="D=1-177"/>
</dbReference>
<dbReference type="PDB" id="1VQ7">
    <property type="method" value="X-ray"/>
    <property type="resolution" value="2.50 A"/>
    <property type="chains" value="D=1-177"/>
</dbReference>
<dbReference type="PDB" id="1VQ8">
    <property type="method" value="X-ray"/>
    <property type="resolution" value="2.20 A"/>
    <property type="chains" value="D=1-177"/>
</dbReference>
<dbReference type="PDB" id="1VQ9">
    <property type="method" value="X-ray"/>
    <property type="resolution" value="2.40 A"/>
    <property type="chains" value="D=1-177"/>
</dbReference>
<dbReference type="PDB" id="1VQK">
    <property type="method" value="X-ray"/>
    <property type="resolution" value="2.30 A"/>
    <property type="chains" value="D=1-177"/>
</dbReference>
<dbReference type="PDB" id="1VQL">
    <property type="method" value="X-ray"/>
    <property type="resolution" value="2.30 A"/>
    <property type="chains" value="D=1-177"/>
</dbReference>
<dbReference type="PDB" id="1VQM">
    <property type="method" value="X-ray"/>
    <property type="resolution" value="2.30 A"/>
    <property type="chains" value="D=1-177"/>
</dbReference>
<dbReference type="PDB" id="1VQN">
    <property type="method" value="X-ray"/>
    <property type="resolution" value="2.40 A"/>
    <property type="chains" value="D=1-177"/>
</dbReference>
<dbReference type="PDB" id="1VQO">
    <property type="method" value="X-ray"/>
    <property type="resolution" value="2.20 A"/>
    <property type="chains" value="D=1-177"/>
</dbReference>
<dbReference type="PDB" id="1VQP">
    <property type="method" value="X-ray"/>
    <property type="resolution" value="2.25 A"/>
    <property type="chains" value="D=1-177"/>
</dbReference>
<dbReference type="PDB" id="1W2B">
    <property type="method" value="X-ray"/>
    <property type="resolution" value="3.50 A"/>
    <property type="chains" value="D=2-177"/>
</dbReference>
<dbReference type="PDB" id="1YHQ">
    <property type="method" value="X-ray"/>
    <property type="resolution" value="2.40 A"/>
    <property type="chains" value="D=1-177"/>
</dbReference>
<dbReference type="PDB" id="1YI2">
    <property type="method" value="X-ray"/>
    <property type="resolution" value="2.65 A"/>
    <property type="chains" value="D=1-177"/>
</dbReference>
<dbReference type="PDB" id="1YIJ">
    <property type="method" value="X-ray"/>
    <property type="resolution" value="2.60 A"/>
    <property type="chains" value="D=1-177"/>
</dbReference>
<dbReference type="PDB" id="1YIT">
    <property type="method" value="X-ray"/>
    <property type="resolution" value="2.80 A"/>
    <property type="chains" value="D=1-177"/>
</dbReference>
<dbReference type="PDB" id="1YJ9">
    <property type="method" value="X-ray"/>
    <property type="resolution" value="2.90 A"/>
    <property type="chains" value="D=1-177"/>
</dbReference>
<dbReference type="PDB" id="1YJN">
    <property type="method" value="X-ray"/>
    <property type="resolution" value="3.00 A"/>
    <property type="chains" value="D=1-177"/>
</dbReference>
<dbReference type="PDB" id="1YJW">
    <property type="method" value="X-ray"/>
    <property type="resolution" value="2.90 A"/>
    <property type="chains" value="D=1-177"/>
</dbReference>
<dbReference type="PDB" id="2OTJ">
    <property type="method" value="X-ray"/>
    <property type="resolution" value="2.90 A"/>
    <property type="chains" value="D=1-177"/>
</dbReference>
<dbReference type="PDB" id="2OTL">
    <property type="method" value="X-ray"/>
    <property type="resolution" value="2.70 A"/>
    <property type="chains" value="D=1-177"/>
</dbReference>
<dbReference type="PDB" id="2QA4">
    <property type="method" value="X-ray"/>
    <property type="resolution" value="3.00 A"/>
    <property type="chains" value="D=1-177"/>
</dbReference>
<dbReference type="PDB" id="2QEX">
    <property type="method" value="X-ray"/>
    <property type="resolution" value="2.90 A"/>
    <property type="chains" value="D=1-177"/>
</dbReference>
<dbReference type="PDB" id="3CC2">
    <property type="method" value="X-ray"/>
    <property type="resolution" value="2.40 A"/>
    <property type="chains" value="D=1-177"/>
</dbReference>
<dbReference type="PDB" id="3CC4">
    <property type="method" value="X-ray"/>
    <property type="resolution" value="2.70 A"/>
    <property type="chains" value="D=1-177"/>
</dbReference>
<dbReference type="PDB" id="3CC7">
    <property type="method" value="X-ray"/>
    <property type="resolution" value="2.70 A"/>
    <property type="chains" value="D=1-177"/>
</dbReference>
<dbReference type="PDB" id="3CCE">
    <property type="method" value="X-ray"/>
    <property type="resolution" value="2.75 A"/>
    <property type="chains" value="D=1-177"/>
</dbReference>
<dbReference type="PDB" id="3CCJ">
    <property type="method" value="X-ray"/>
    <property type="resolution" value="2.70 A"/>
    <property type="chains" value="D=1-177"/>
</dbReference>
<dbReference type="PDB" id="3CCL">
    <property type="method" value="X-ray"/>
    <property type="resolution" value="2.90 A"/>
    <property type="chains" value="D=1-177"/>
</dbReference>
<dbReference type="PDB" id="3CCM">
    <property type="method" value="X-ray"/>
    <property type="resolution" value="2.55 A"/>
    <property type="chains" value="D=1-177"/>
</dbReference>
<dbReference type="PDB" id="3CCQ">
    <property type="method" value="X-ray"/>
    <property type="resolution" value="2.90 A"/>
    <property type="chains" value="D=1-177"/>
</dbReference>
<dbReference type="PDB" id="3CCR">
    <property type="method" value="X-ray"/>
    <property type="resolution" value="3.00 A"/>
    <property type="chains" value="D=1-177"/>
</dbReference>
<dbReference type="PDB" id="3CCS">
    <property type="method" value="X-ray"/>
    <property type="resolution" value="2.95 A"/>
    <property type="chains" value="D=1-177"/>
</dbReference>
<dbReference type="PDB" id="3CCU">
    <property type="method" value="X-ray"/>
    <property type="resolution" value="2.80 A"/>
    <property type="chains" value="D=1-177"/>
</dbReference>
<dbReference type="PDB" id="3CCV">
    <property type="method" value="X-ray"/>
    <property type="resolution" value="2.90 A"/>
    <property type="chains" value="D=1-177"/>
</dbReference>
<dbReference type="PDB" id="3CD6">
    <property type="method" value="X-ray"/>
    <property type="resolution" value="2.75 A"/>
    <property type="chains" value="D=1-177"/>
</dbReference>
<dbReference type="PDB" id="3CMA">
    <property type="method" value="X-ray"/>
    <property type="resolution" value="2.80 A"/>
    <property type="chains" value="D=1-177"/>
</dbReference>
<dbReference type="PDB" id="3CME">
    <property type="method" value="X-ray"/>
    <property type="resolution" value="2.95 A"/>
    <property type="chains" value="D=1-177"/>
</dbReference>
<dbReference type="PDB" id="3CPW">
    <property type="method" value="X-ray"/>
    <property type="resolution" value="2.70 A"/>
    <property type="chains" value="D=1-177"/>
</dbReference>
<dbReference type="PDB" id="3CXC">
    <property type="method" value="X-ray"/>
    <property type="resolution" value="3.00 A"/>
    <property type="chains" value="D=2-177"/>
</dbReference>
<dbReference type="PDB" id="3G4S">
    <property type="method" value="X-ray"/>
    <property type="resolution" value="3.20 A"/>
    <property type="chains" value="D=1-177"/>
</dbReference>
<dbReference type="PDB" id="3G6E">
    <property type="method" value="X-ray"/>
    <property type="resolution" value="2.70 A"/>
    <property type="chains" value="D=1-177"/>
</dbReference>
<dbReference type="PDB" id="3G71">
    <property type="method" value="X-ray"/>
    <property type="resolution" value="2.85 A"/>
    <property type="chains" value="D=1-177"/>
</dbReference>
<dbReference type="PDB" id="3I55">
    <property type="method" value="X-ray"/>
    <property type="resolution" value="3.11 A"/>
    <property type="chains" value="D=1-177"/>
</dbReference>
<dbReference type="PDB" id="3I56">
    <property type="method" value="X-ray"/>
    <property type="resolution" value="2.90 A"/>
    <property type="chains" value="D=1-177"/>
</dbReference>
<dbReference type="PDB" id="3OW2">
    <property type="method" value="X-ray"/>
    <property type="resolution" value="2.70 A"/>
    <property type="chains" value="D=11-175"/>
</dbReference>
<dbReference type="PDB" id="4ADX">
    <property type="method" value="EM"/>
    <property type="resolution" value="6.60 A"/>
    <property type="chains" value="D=1-177"/>
</dbReference>
<dbReference type="PDB" id="4V42">
    <property type="method" value="X-ray"/>
    <property type="resolution" value="5.50 A"/>
    <property type="chains" value="BG=2-177"/>
</dbReference>
<dbReference type="PDB" id="4V4R">
    <property type="method" value="X-ray"/>
    <property type="resolution" value="5.90 A"/>
    <property type="chains" value="BG=2-177"/>
</dbReference>
<dbReference type="PDB" id="4V4S">
    <property type="method" value="X-ray"/>
    <property type="resolution" value="6.76 A"/>
    <property type="chains" value="G=2-177"/>
</dbReference>
<dbReference type="PDB" id="4V4T">
    <property type="method" value="X-ray"/>
    <property type="resolution" value="6.46 A"/>
    <property type="chains" value="G=2-177"/>
</dbReference>
<dbReference type="PDB" id="4V9F">
    <property type="method" value="X-ray"/>
    <property type="resolution" value="2.40 A"/>
    <property type="chains" value="D=1-177"/>
</dbReference>
<dbReference type="PDBsum" id="1FFK"/>
<dbReference type="PDBsum" id="1JJ2"/>
<dbReference type="PDBsum" id="1K73"/>
<dbReference type="PDBsum" id="1K8A"/>
<dbReference type="PDBsum" id="1K9M"/>
<dbReference type="PDBsum" id="1KC8"/>
<dbReference type="PDBsum" id="1KD1"/>
<dbReference type="PDBsum" id="1KQS"/>
<dbReference type="PDBsum" id="1M1K"/>
<dbReference type="PDBsum" id="1M90"/>
<dbReference type="PDBsum" id="1ML5"/>
<dbReference type="PDBsum" id="1N8R"/>
<dbReference type="PDBsum" id="1NJI"/>
<dbReference type="PDBsum" id="1Q7Y"/>
<dbReference type="PDBsum" id="1Q81"/>
<dbReference type="PDBsum" id="1Q82"/>
<dbReference type="PDBsum" id="1Q86"/>
<dbReference type="PDBsum" id="1QVF"/>
<dbReference type="PDBsum" id="1QVG"/>
<dbReference type="PDBsum" id="1S72"/>
<dbReference type="PDBsum" id="1VQ4"/>
<dbReference type="PDBsum" id="1VQ5"/>
<dbReference type="PDBsum" id="1VQ6"/>
<dbReference type="PDBsum" id="1VQ7"/>
<dbReference type="PDBsum" id="1VQ8"/>
<dbReference type="PDBsum" id="1VQ9"/>
<dbReference type="PDBsum" id="1VQK"/>
<dbReference type="PDBsum" id="1VQL"/>
<dbReference type="PDBsum" id="1VQM"/>
<dbReference type="PDBsum" id="1VQN"/>
<dbReference type="PDBsum" id="1VQO"/>
<dbReference type="PDBsum" id="1VQP"/>
<dbReference type="PDBsum" id="1W2B"/>
<dbReference type="PDBsum" id="1YHQ"/>
<dbReference type="PDBsum" id="1YI2"/>
<dbReference type="PDBsum" id="1YIJ"/>
<dbReference type="PDBsum" id="1YIT"/>
<dbReference type="PDBsum" id="1YJ9"/>
<dbReference type="PDBsum" id="1YJN"/>
<dbReference type="PDBsum" id="1YJW"/>
<dbReference type="PDBsum" id="2OTJ"/>
<dbReference type="PDBsum" id="2OTL"/>
<dbReference type="PDBsum" id="2QA4"/>
<dbReference type="PDBsum" id="2QEX"/>
<dbReference type="PDBsum" id="3CC2"/>
<dbReference type="PDBsum" id="3CC4"/>
<dbReference type="PDBsum" id="3CC7"/>
<dbReference type="PDBsum" id="3CCE"/>
<dbReference type="PDBsum" id="3CCJ"/>
<dbReference type="PDBsum" id="3CCL"/>
<dbReference type="PDBsum" id="3CCM"/>
<dbReference type="PDBsum" id="3CCQ"/>
<dbReference type="PDBsum" id="3CCR"/>
<dbReference type="PDBsum" id="3CCS"/>
<dbReference type="PDBsum" id="3CCU"/>
<dbReference type="PDBsum" id="3CCV"/>
<dbReference type="PDBsum" id="3CD6"/>
<dbReference type="PDBsum" id="3CMA"/>
<dbReference type="PDBsum" id="3CME"/>
<dbReference type="PDBsum" id="3CPW"/>
<dbReference type="PDBsum" id="3CXC"/>
<dbReference type="PDBsum" id="3G4S"/>
<dbReference type="PDBsum" id="3G6E"/>
<dbReference type="PDBsum" id="3G71"/>
<dbReference type="PDBsum" id="3I55"/>
<dbReference type="PDBsum" id="3I56"/>
<dbReference type="PDBsum" id="3OW2"/>
<dbReference type="PDBsum" id="4ADX"/>
<dbReference type="PDBsum" id="4V42"/>
<dbReference type="PDBsum" id="4V4R"/>
<dbReference type="PDBsum" id="4V4S"/>
<dbReference type="PDBsum" id="4V4T"/>
<dbReference type="PDBsum" id="4V9F"/>
<dbReference type="SMR" id="P14124"/>
<dbReference type="IntAct" id="P14124">
    <property type="interactions" value="3"/>
</dbReference>
<dbReference type="STRING" id="272569.rrnAC1598"/>
<dbReference type="PaxDb" id="272569-rrnAC1598"/>
<dbReference type="EnsemblBacteria" id="AAV46516">
    <property type="protein sequence ID" value="AAV46516"/>
    <property type="gene ID" value="rrnAC1598"/>
</dbReference>
<dbReference type="KEGG" id="hma:rrnAC1598"/>
<dbReference type="PATRIC" id="fig|272569.17.peg.2288"/>
<dbReference type="eggNOG" id="arCOG04092">
    <property type="taxonomic scope" value="Archaea"/>
</dbReference>
<dbReference type="HOGENOM" id="CLU_061015_3_0_2"/>
<dbReference type="EvolutionaryTrace" id="P14124"/>
<dbReference type="Proteomes" id="UP000001169">
    <property type="component" value="Chromosome I"/>
</dbReference>
<dbReference type="GO" id="GO:1990904">
    <property type="term" value="C:ribonucleoprotein complex"/>
    <property type="evidence" value="ECO:0007669"/>
    <property type="project" value="UniProtKB-KW"/>
</dbReference>
<dbReference type="GO" id="GO:0005840">
    <property type="term" value="C:ribosome"/>
    <property type="evidence" value="ECO:0007669"/>
    <property type="project" value="UniProtKB-KW"/>
</dbReference>
<dbReference type="GO" id="GO:0019843">
    <property type="term" value="F:rRNA binding"/>
    <property type="evidence" value="ECO:0007669"/>
    <property type="project" value="UniProtKB-UniRule"/>
</dbReference>
<dbReference type="GO" id="GO:0003735">
    <property type="term" value="F:structural constituent of ribosome"/>
    <property type="evidence" value="ECO:0007669"/>
    <property type="project" value="InterPro"/>
</dbReference>
<dbReference type="GO" id="GO:0000049">
    <property type="term" value="F:tRNA binding"/>
    <property type="evidence" value="ECO:0007669"/>
    <property type="project" value="UniProtKB-UniRule"/>
</dbReference>
<dbReference type="GO" id="GO:0006412">
    <property type="term" value="P:translation"/>
    <property type="evidence" value="ECO:0007669"/>
    <property type="project" value="UniProtKB-UniRule"/>
</dbReference>
<dbReference type="FunFam" id="3.30.1440.10:FF:000002">
    <property type="entry name" value="60S ribosomal protein L11"/>
    <property type="match status" value="1"/>
</dbReference>
<dbReference type="Gene3D" id="3.30.1440.10">
    <property type="match status" value="1"/>
</dbReference>
<dbReference type="HAMAP" id="MF_01333_A">
    <property type="entry name" value="Ribosomal_uL5_A"/>
    <property type="match status" value="1"/>
</dbReference>
<dbReference type="InterPro" id="IPR002132">
    <property type="entry name" value="Ribosomal_uL5"/>
</dbReference>
<dbReference type="InterPro" id="IPR022804">
    <property type="entry name" value="Ribosomal_uL5_arc"/>
</dbReference>
<dbReference type="InterPro" id="IPR031309">
    <property type="entry name" value="Ribosomal_uL5_C"/>
</dbReference>
<dbReference type="InterPro" id="IPR020929">
    <property type="entry name" value="Ribosomal_uL5_CS"/>
</dbReference>
<dbReference type="InterPro" id="IPR022803">
    <property type="entry name" value="Ribosomal_uL5_dom_sf"/>
</dbReference>
<dbReference type="InterPro" id="IPR031310">
    <property type="entry name" value="Ribosomal_uL5_N"/>
</dbReference>
<dbReference type="NCBIfam" id="NF003258">
    <property type="entry name" value="PRK04219.1"/>
    <property type="match status" value="1"/>
</dbReference>
<dbReference type="PANTHER" id="PTHR11994">
    <property type="entry name" value="60S RIBOSOMAL PROTEIN L11-RELATED"/>
    <property type="match status" value="1"/>
</dbReference>
<dbReference type="Pfam" id="PF00281">
    <property type="entry name" value="Ribosomal_L5"/>
    <property type="match status" value="1"/>
</dbReference>
<dbReference type="Pfam" id="PF00673">
    <property type="entry name" value="Ribosomal_L5_C"/>
    <property type="match status" value="1"/>
</dbReference>
<dbReference type="PIRSF" id="PIRSF002161">
    <property type="entry name" value="Ribosomal_L5"/>
    <property type="match status" value="1"/>
</dbReference>
<dbReference type="SUPFAM" id="SSF55282">
    <property type="entry name" value="RL5-like"/>
    <property type="match status" value="1"/>
</dbReference>
<dbReference type="PROSITE" id="PS00358">
    <property type="entry name" value="RIBOSOMAL_L5"/>
    <property type="match status" value="1"/>
</dbReference>
<comment type="function">
    <text>This is 1 of 5 proteins that mediates the attachment of the 5S rRNA onto the large ribosomal subunit, stabilizing the orientation of adjacent RNA domains. Forms part of the central protuberance. Modeling places the A and P site tRNAs in close proximity to this protein; the 5S rRNA and some of its associated proteins might help stabilize positioning of ribosome-bound tRNAs. In the 70S ribosome it is thought to contact protein S13 of the 30S subunit (bridge B1b), connecting the 2 subunits; this bridge is implicated in subunit movement.</text>
</comment>
<comment type="subunit">
    <text evidence="1">Part of the 50S ribosomal subunit. Interacts with protein L18 and the 5S rRNA, and probably with tRNAs. Forms a bridge to the 30S subunit in the 70S ribosome (By similarity).</text>
</comment>
<comment type="similarity">
    <text evidence="4">Belongs to the universal ribosomal protein uL5 family.</text>
</comment>
<accession>P14124</accession>
<accession>Q5V1T6</accession>
<name>RL5_HALMA</name>
<organism>
    <name type="scientific">Haloarcula marismortui (strain ATCC 43049 / DSM 3752 / JCM 8966 / VKM B-1809)</name>
    <name type="common">Halobacterium marismortui</name>
    <dbReference type="NCBI Taxonomy" id="272569"/>
    <lineage>
        <taxon>Archaea</taxon>
        <taxon>Methanobacteriati</taxon>
        <taxon>Methanobacteriota</taxon>
        <taxon>Stenosarchaea group</taxon>
        <taxon>Halobacteria</taxon>
        <taxon>Halobacteriales</taxon>
        <taxon>Haloarculaceae</taxon>
        <taxon>Haloarcula</taxon>
    </lineage>
</organism>
<evidence type="ECO:0000250" key="1"/>
<evidence type="ECO:0000269" key="2">
    <source>
    </source>
</evidence>
<evidence type="ECO:0000269" key="3">
    <source>
    </source>
</evidence>
<evidence type="ECO:0000305" key="4"/>
<evidence type="ECO:0007829" key="5">
    <source>
        <dbReference type="PDB" id="1VQ6"/>
    </source>
</evidence>
<evidence type="ECO:0007829" key="6">
    <source>
        <dbReference type="PDB" id="1VQ8"/>
    </source>
</evidence>
<evidence type="ECO:0007829" key="7">
    <source>
        <dbReference type="PDB" id="3G6E"/>
    </source>
</evidence>
<reference key="1">
    <citation type="journal article" date="1991" name="Mol. Gen. Genet.">
        <title>Organization and nucleotide sequence of ten ribosomal protein genes from the region equivalent to the spectinomycin operon in the archaebacterium Halobacterium marismortui.</title>
        <authorList>
            <person name="Scholzen T."/>
            <person name="Arndt E."/>
        </authorList>
    </citation>
    <scope>NUCLEOTIDE SEQUENCE [GENOMIC DNA]</scope>
</reference>
<reference key="2">
    <citation type="journal article" date="2004" name="Genome Res.">
        <title>Genome sequence of Haloarcula marismortui: a halophilic archaeon from the Dead Sea.</title>
        <authorList>
            <person name="Baliga N.S."/>
            <person name="Bonneau R."/>
            <person name="Facciotti M.T."/>
            <person name="Pan M."/>
            <person name="Glusman G."/>
            <person name="Deutsch E.W."/>
            <person name="Shannon P."/>
            <person name="Chiu Y."/>
            <person name="Weng R.S."/>
            <person name="Gan R.R."/>
            <person name="Hung P."/>
            <person name="Date S.V."/>
            <person name="Marcotte E."/>
            <person name="Hood L."/>
            <person name="Ng W.V."/>
        </authorList>
    </citation>
    <scope>NUCLEOTIDE SEQUENCE [LARGE SCALE GENOMIC DNA]</scope>
    <source>
        <strain>ATCC 43049 / DSM 3752 / JCM 8966 / VKM B-1809</strain>
    </source>
</reference>
<reference key="3">
    <citation type="journal article" date="1990" name="Biochim. Biophys. Acta">
        <title>Amino acid sequences of the ribosomal proteins HL30 and HmaL5 from the archaebacterium Halobacterium marismortui.</title>
        <authorList>
            <person name="Hatakeyama T."/>
            <person name="Hatakeyama T."/>
        </authorList>
    </citation>
    <scope>PROTEIN SEQUENCE OF 2-177</scope>
</reference>
<reference key="4">
    <citation type="journal article" date="1988" name="Biochemistry">
        <title>Extended N-terminal sequencing of proteins of archaebacterial ribosomes blotted from two-dimensional gels onto glass fiber and poly(vinylidene difluoride) membrane.</title>
        <authorList>
            <person name="Walsh M.J."/>
            <person name="McDougall J."/>
            <person name="Wittmann-Liebold B."/>
        </authorList>
    </citation>
    <scope>PROTEIN SEQUENCE OF 2-23</scope>
</reference>
<reference key="5">
    <citation type="journal article" date="2000" name="Science">
        <title>The complete atomic structure of the large ribosomal subunit at 2.4 A resolution.</title>
        <authorList>
            <person name="Ban N."/>
            <person name="Nissen P."/>
            <person name="Hansen J."/>
            <person name="Moore P.B."/>
            <person name="Steitz T.A."/>
        </authorList>
    </citation>
    <scope>X-RAY CRYSTALLOGRAPHY (2.4 ANGSTROMS) OF 11-175 IN THE 50S SUBUNIT</scope>
    <source>
        <strain>ATCC 43049 / DSM 3752 / JCM 8966 / VKM B-1809</strain>
    </source>
</reference>
<reference key="6">
    <citation type="journal article" date="2000" name="Science">
        <title>The structural basis of ribosome activity in peptide bond synthesis.</title>
        <authorList>
            <person name="Nissen P."/>
            <person name="Hansen J."/>
            <person name="Ban N."/>
            <person name="Moore P.B."/>
            <person name="Steitz T.A."/>
        </authorList>
    </citation>
    <scope>X-RAY CRYSTALLOGRAPHY (3.0 ANGSTROMS) OF THE 50S SUBUNIT</scope>
    <source>
        <strain>ATCC 43049 / DSM 3752 / JCM 8966 / VKM B-1809</strain>
    </source>
</reference>
<reference key="7">
    <citation type="journal article" date="2002" name="Nat. Struct. Biol.">
        <title>A pre-translocational intermediate in protein synthesis observed in crystals of enzymatically active 50S subunits.</title>
        <authorList>
            <person name="Schmeing T.M."/>
            <person name="Seila A.C."/>
            <person name="Hansen J.L."/>
            <person name="Freeborn B."/>
            <person name="Soukup J.K."/>
            <person name="Scaringe S.A."/>
            <person name="Strobel S.A."/>
            <person name="Moore P.B."/>
            <person name="Steitz T.A."/>
        </authorList>
    </citation>
    <scope>X-RAY CRYSTALLOGRAPHY (3.1 ANGSTROMS) OF THE 50S SUBUNIT</scope>
    <source>
        <strain>ATCC 43049 / DSM 3752 / JCM 8966 / VKM B-1809</strain>
    </source>
</reference>
<reference key="8">
    <citation type="journal article" date="2001" name="EMBO J.">
        <title>The kink-turn: a new RNA secondary structure motif.</title>
        <authorList>
            <person name="Klein D.J."/>
            <person name="Schmeing T.M."/>
            <person name="Moore P.B."/>
            <person name="Steitz T.A."/>
        </authorList>
    </citation>
    <scope>X-RAY CRYSTALLOGRAPHY (2.4 ANGSTROMS) OF THE 50S SUBUNIT</scope>
    <source>
        <strain>ATCC 43049 / DSM 3752 / JCM 8966 / VKM B-1809</strain>
    </source>
</reference>
<reference key="9">
    <citation type="journal article" date="2002" name="Mol. Cell">
        <title>The structures of four macrolide antibiotics bound to the large ribosomal subunit.</title>
        <authorList>
            <person name="Hansen J.L."/>
            <person name="Ippolito J.A."/>
            <person name="Ban N."/>
            <person name="Nissen P."/>
            <person name="Moore P.B."/>
            <person name="Steitz T.A."/>
        </authorList>
    </citation>
    <scope>X-RAY CRYSTALLOGRAPHY (3.0 ANGSTROMS) OF THE 50S SUBUNIT IN COMPLEX WITH FOUR MACROLIDE ANTIBIOTICS</scope>
    <source>
        <strain>ATCC 43049 / DSM 3752 / JCM 8966 / VKM B-1809</strain>
    </source>
</reference>
<reference key="10">
    <citation type="journal article" date="2002" name="Proc. Natl. Acad. Sci. U.S.A.">
        <title>Structural insights into peptide bond formation.</title>
        <authorList>
            <person name="Hansen J.L."/>
            <person name="Schmeing T.M."/>
            <person name="Moore P.B."/>
            <person name="Steitz T.A."/>
        </authorList>
    </citation>
    <scope>X-RAY CRYSTALLOGRAPHY (2.8 ANGSTROMS) OF THE 50S SUBUNIT</scope>
    <source>
        <strain>ATCC 43049 / DSM 3752 / JCM 8966 / VKM B-1809</strain>
    </source>
</reference>
<reference key="11">
    <citation type="journal article" date="2003" name="J. Mol. Biol.">
        <title>Structures of five antibiotics bound at the peptidyl transferase center of the large ribosomal subunit.</title>
        <authorList>
            <person name="Hansen J.L."/>
            <person name="Moore P.B."/>
            <person name="Steitz T.A."/>
        </authorList>
    </citation>
    <scope>X-RAY CRYSTALLOGRAPHY (3.0 ANGSTROMS) OF THE 50S SUBUNIT IN COMPLEX WITH FIVE ANTIBIOTICS AT THE PEPTIDYL TRANSFERASE CENTER</scope>
    <source>
        <strain>ATCC 43049 / DSM 3752 / JCM 8966 / VKM B-1809</strain>
    </source>
</reference>
<reference key="12">
    <citation type="journal article" date="2003" name="RNA">
        <title>Structures of deacylated tRNA mimics bound to the E site of the large ribosomal subunit.</title>
        <authorList>
            <person name="Schmeing T.M."/>
            <person name="Moore P.B."/>
            <person name="Steitz T.A."/>
        </authorList>
    </citation>
    <scope>X-RAY CRYSTALLOGRAPHY (2.9 ANGSTROMS) OF THE 50S SUBUNIT WITH TWO DIFFERENT E SITE SUBSTRATES</scope>
</reference>
<reference key="13">
    <citation type="journal article" date="2013" name="Acta Crystallogr. D">
        <title>Revisiting the Haloarcula marismortui 50S ribosomal subunit model.</title>
        <authorList>
            <person name="Gabdulkhakov A."/>
            <person name="Nikonov S."/>
            <person name="Garber M."/>
        </authorList>
    </citation>
    <scope>X-RAY CRYSTALLOGRAPHY (2.4 ANGSTROMS) OF THE 50S SUBUNIT</scope>
</reference>
<protein>
    <recommendedName>
        <fullName evidence="4">Large ribosomal subunit protein uL5</fullName>
    </recommendedName>
    <alternativeName>
        <fullName>50S ribosomal protein L5</fullName>
    </alternativeName>
    <alternativeName>
        <fullName>Hl13</fullName>
    </alternativeName>
    <alternativeName>
        <fullName>Hmal5</fullName>
    </alternativeName>
</protein>
<keyword id="KW-0002">3D-structure</keyword>
<keyword id="KW-0903">Direct protein sequencing</keyword>
<keyword id="KW-1185">Reference proteome</keyword>
<keyword id="KW-0687">Ribonucleoprotein</keyword>
<keyword id="KW-0689">Ribosomal protein</keyword>
<keyword id="KW-0694">RNA-binding</keyword>
<keyword id="KW-0699">rRNA-binding</keyword>
<keyword id="KW-0820">tRNA-binding</keyword>
<gene>
    <name type="primary">rpl5</name>
    <name type="ordered locus">rrnAC1598</name>
</gene>
<sequence length="177" mass="19528">MSSESESGGDFHEMREPRIEKVVVHMGIGHGGRDLANAEDILGEITGQMPVRTKAKRTVGEFDIREGDPIGAKVTLRDEMAEEFLQTALPLAELATSQFDDTGNFSFGVEEHTEFPSQEYDPSIGIYGLDVTVNLVRPGYRVAKRDKASRSIPTKHRLNPADAVAFIESTYDVEVSE</sequence>
<proteinExistence type="evidence at protein level"/>